<keyword id="KW-0150">Chloroplast</keyword>
<keyword id="KW-0456">Lyase</keyword>
<keyword id="KW-0460">Magnesium</keyword>
<keyword id="KW-0479">Metal-binding</keyword>
<keyword id="KW-0934">Plastid</keyword>
<keyword id="KW-0809">Transit peptide</keyword>
<comment type="function">
    <text evidence="4">Terpene synthase (TPS) involved in the biosynthesis of monoterpene natural products included in conifer oleoresin secretions and volatile emissions; these compounds contribute to biotic and abiotic stress defense against herbivores and pathogens (PubMed:21385377). Catalyzes the conversion of (2E)-geranyl diphosphate (GPP) to 1,8-cineole (PubMed:21385377).</text>
</comment>
<comment type="catalytic activity">
    <reaction evidence="4">
        <text>(2E)-geranyl diphosphate + H2O = 1,8-cineole + diphosphate</text>
        <dbReference type="Rhea" id="RHEA:32543"/>
        <dbReference type="ChEBI" id="CHEBI:15377"/>
        <dbReference type="ChEBI" id="CHEBI:27961"/>
        <dbReference type="ChEBI" id="CHEBI:33019"/>
        <dbReference type="ChEBI" id="CHEBI:58057"/>
        <dbReference type="EC" id="4.2.3.108"/>
    </reaction>
</comment>
<comment type="cofactor">
    <cofactor evidence="1">
        <name>Mg(2+)</name>
        <dbReference type="ChEBI" id="CHEBI:18420"/>
    </cofactor>
    <cofactor evidence="1">
        <name>Mn(2+)</name>
        <dbReference type="ChEBI" id="CHEBI:29035"/>
    </cofactor>
    <text evidence="1">Binds 3 Mg(2+) or Mn(2+) ions per subunit.</text>
</comment>
<comment type="pathway">
    <text evidence="4">Terpene metabolism; oleoresin biosynthesis.</text>
</comment>
<comment type="subcellular location">
    <subcellularLocation>
        <location evidence="3">Plastid</location>
        <location evidence="3">Chloroplast</location>
    </subcellularLocation>
</comment>
<comment type="domain">
    <text evidence="1">The Asp-Asp-Xaa-Xaa-Asp/Glu (DDXXD/E) motif is important for the catalytic activity, presumably through binding to Mg(2+).</text>
</comment>
<comment type="similarity">
    <text evidence="6">Belongs to the terpene synthase family. Tpsd subfamily.</text>
</comment>
<feature type="transit peptide" description="Chloroplast" evidence="3">
    <location>
        <begin position="1"/>
        <end position="52"/>
    </location>
</feature>
<feature type="chain" id="PRO_0000454401" description="1,8-cineole synthase, chloroplastic">
    <location>
        <begin position="53"/>
        <end position="612"/>
    </location>
</feature>
<feature type="short sequence motif" description="DDXXD motif" evidence="1">
    <location>
        <begin position="363"/>
        <end position="367"/>
    </location>
</feature>
<feature type="binding site" evidence="2">
    <location>
        <position position="363"/>
    </location>
    <ligand>
        <name>Mg(2+)</name>
        <dbReference type="ChEBI" id="CHEBI:18420"/>
        <label>1</label>
    </ligand>
</feature>
<feature type="binding site" evidence="2">
    <location>
        <position position="363"/>
    </location>
    <ligand>
        <name>Mg(2+)</name>
        <dbReference type="ChEBI" id="CHEBI:18420"/>
        <label>2</label>
    </ligand>
</feature>
<feature type="binding site" evidence="2">
    <location>
        <position position="367"/>
    </location>
    <ligand>
        <name>Mg(2+)</name>
        <dbReference type="ChEBI" id="CHEBI:18420"/>
        <label>1</label>
    </ligand>
</feature>
<feature type="binding site" evidence="2">
    <location>
        <position position="367"/>
    </location>
    <ligand>
        <name>Mg(2+)</name>
        <dbReference type="ChEBI" id="CHEBI:18420"/>
        <label>2</label>
    </ligand>
</feature>
<feature type="binding site" evidence="2">
    <location>
        <position position="515"/>
    </location>
    <ligand>
        <name>Mg(2+)</name>
        <dbReference type="ChEBI" id="CHEBI:18420"/>
        <label>3</label>
    </ligand>
</feature>
<sequence length="612" mass="70287">MALVSVAPLASRSCLSKSLISSTHELKPLRRTILPTLRWKSATPSINMCLTTSNSVDAVQRRIANHHSNLWDDDFIQSLSTPYEAPSYRERAERLIGEVKEMFESMGPNNDLLQRLSMVESVERLGIDRHFKNEIKSALDYVYSHWNEKGIGCGRDSVVSDLNSTALALRTLRLHGYPVSSDVLEHFKDQKGRFACSSIKTEGEIRSLLNLFRASLVAFPNEKVMEEAEIFSTTYLKEAVQKIPVSSLSRQIEYNMEYGWHTNLPRLEARNYMGDMIHEMPYMNAEKLLELAKLEFNIFHSLQERELKHLSRWWKDSGFSQLTFVRHRHVEYYTLASCIDIDPKHSAFRLGFAKMCHLITVLDDIYDTFGTMDELKLFTAAIKRWDPSATEWLPEYMKGVYMVVYETVNEMAGEAKKSQGRDTINYSRQAWEAYIDSYMKEAEWISSGCLPTFEEYYENGKVSFGYQISVLQPILTLDVPLPHHILQEIIFPSRFNGLASGILRLKGDTRCYQADRARGEEASCISCYMNDNPGATEEDALNHINAMVNELMKEFNWELLKPDNNVPVSSKKHAFDITRVVHHGYKYRDGYSVANNEIKNLVITTVLEPVPL</sequence>
<reference key="1">
    <citation type="journal article" date="2008" name="BMC Genomics">
        <title>A conifer genomics resource of 200,000 spruce (Picea spp.) ESTs and 6,464 high-quality, sequence-finished full-length cDNAs for Sitka spruce (Picea sitchensis).</title>
        <authorList>
            <person name="Ralph S.G."/>
            <person name="Chun H.J.E."/>
            <person name="Kolosova N."/>
            <person name="Cooper D."/>
            <person name="Oddy C."/>
            <person name="Ritland C.E."/>
            <person name="Kirkpatrick R."/>
            <person name="Moore R."/>
            <person name="Barber S."/>
            <person name="Holt R.A."/>
            <person name="Jones S.J.M."/>
            <person name="Marra M.A."/>
            <person name="Douglas C.J."/>
            <person name="Ritland K."/>
            <person name="Bohlmann J."/>
        </authorList>
    </citation>
    <scope>NUCLEOTIDE SEQUENCE [MRNA]</scope>
    <source>
        <strain>cv. FB3-425</strain>
        <tissue>Bark</tissue>
    </source>
</reference>
<reference key="2">
    <citation type="journal article" date="2011" name="BMC Plant Biol.">
        <title>Transcriptome mining, functional characterization, and phylogeny of a large terpene synthase gene family in spruce (Picea spp.).</title>
        <authorList>
            <person name="Keeling C.I."/>
            <person name="Weisshaar S."/>
            <person name="Ralph S.G."/>
            <person name="Jancsik S."/>
            <person name="Hamberger B."/>
            <person name="Dullat H.K."/>
            <person name="Bohlmann J."/>
        </authorList>
    </citation>
    <scope>NUCLEOTIDE SEQUENCE [MRNA]</scope>
    <scope>CATALYTIC ACTIVITY</scope>
    <scope>FUNCTION</scope>
    <scope>PATHWAY</scope>
    <scope>GENE FAMILY</scope>
    <source>
        <strain>cv. FB3-425</strain>
    </source>
</reference>
<name>CINES_PICSI</name>
<evidence type="ECO:0000250" key="1">
    <source>
        <dbReference type="UniProtKB" id="A0A1C9J6A7"/>
    </source>
</evidence>
<evidence type="ECO:0000250" key="2">
    <source>
        <dbReference type="UniProtKB" id="Q40577"/>
    </source>
</evidence>
<evidence type="ECO:0000255" key="3"/>
<evidence type="ECO:0000269" key="4">
    <source>
    </source>
</evidence>
<evidence type="ECO:0000303" key="5">
    <source>
    </source>
</evidence>
<evidence type="ECO:0000305" key="6"/>
<dbReference type="EC" id="4.2.3.108" evidence="4"/>
<dbReference type="EMBL" id="BT071518">
    <property type="protein sequence ID" value="ACN40975.1"/>
    <property type="molecule type" value="mRNA"/>
</dbReference>
<dbReference type="EMBL" id="HQ426165">
    <property type="protein sequence ID" value="ADZ45499.1"/>
    <property type="molecule type" value="mRNA"/>
</dbReference>
<dbReference type="SMR" id="C0PT35"/>
<dbReference type="OMA" id="PLCTYES"/>
<dbReference type="UniPathway" id="UPA00924"/>
<dbReference type="GO" id="GO:0009507">
    <property type="term" value="C:chloroplast"/>
    <property type="evidence" value="ECO:0007669"/>
    <property type="project" value="UniProtKB-SubCell"/>
</dbReference>
<dbReference type="GO" id="GO:0102313">
    <property type="term" value="F:1,8-cineole synthase activity"/>
    <property type="evidence" value="ECO:0000314"/>
    <property type="project" value="UniProtKB"/>
</dbReference>
<dbReference type="GO" id="GO:0016829">
    <property type="term" value="F:lyase activity"/>
    <property type="evidence" value="ECO:0000314"/>
    <property type="project" value="UniProtKB"/>
</dbReference>
<dbReference type="GO" id="GO:0000287">
    <property type="term" value="F:magnesium ion binding"/>
    <property type="evidence" value="ECO:0007669"/>
    <property type="project" value="InterPro"/>
</dbReference>
<dbReference type="GO" id="GO:0010333">
    <property type="term" value="F:terpene synthase activity"/>
    <property type="evidence" value="ECO:0007669"/>
    <property type="project" value="InterPro"/>
</dbReference>
<dbReference type="GO" id="GO:0016102">
    <property type="term" value="P:diterpenoid biosynthetic process"/>
    <property type="evidence" value="ECO:0007669"/>
    <property type="project" value="InterPro"/>
</dbReference>
<dbReference type="GO" id="GO:0010597">
    <property type="term" value="P:green leaf volatile biosynthetic process"/>
    <property type="evidence" value="ECO:0000314"/>
    <property type="project" value="UniProtKB"/>
</dbReference>
<dbReference type="GO" id="GO:0016099">
    <property type="term" value="P:monoterpenoid biosynthetic process"/>
    <property type="evidence" value="ECO:0000314"/>
    <property type="project" value="UniProtKB"/>
</dbReference>
<dbReference type="CDD" id="cd00684">
    <property type="entry name" value="Terpene_cyclase_plant_C1"/>
    <property type="match status" value="1"/>
</dbReference>
<dbReference type="FunFam" id="1.50.10.130:FF:000002">
    <property type="entry name" value="Ent-copalyl diphosphate synthase, chloroplastic"/>
    <property type="match status" value="1"/>
</dbReference>
<dbReference type="FunFam" id="1.10.600.10:FF:000005">
    <property type="entry name" value="Ent-kaur-16-ene synthase, chloroplastic"/>
    <property type="match status" value="1"/>
</dbReference>
<dbReference type="Gene3D" id="1.10.600.10">
    <property type="entry name" value="Farnesyl Diphosphate Synthase"/>
    <property type="match status" value="1"/>
</dbReference>
<dbReference type="Gene3D" id="1.50.10.130">
    <property type="entry name" value="Terpene synthase, N-terminal domain"/>
    <property type="match status" value="1"/>
</dbReference>
<dbReference type="InterPro" id="IPR008949">
    <property type="entry name" value="Isoprenoid_synthase_dom_sf"/>
</dbReference>
<dbReference type="InterPro" id="IPR034741">
    <property type="entry name" value="Terpene_cyclase-like_1_C"/>
</dbReference>
<dbReference type="InterPro" id="IPR044814">
    <property type="entry name" value="Terpene_cyclase_plant_C1"/>
</dbReference>
<dbReference type="InterPro" id="IPR001906">
    <property type="entry name" value="Terpene_synth_N"/>
</dbReference>
<dbReference type="InterPro" id="IPR036965">
    <property type="entry name" value="Terpene_synth_N_sf"/>
</dbReference>
<dbReference type="InterPro" id="IPR050148">
    <property type="entry name" value="Terpene_synthase-like"/>
</dbReference>
<dbReference type="InterPro" id="IPR005630">
    <property type="entry name" value="Terpene_synthase_metal-bd"/>
</dbReference>
<dbReference type="InterPro" id="IPR008930">
    <property type="entry name" value="Terpenoid_cyclase/PrenylTrfase"/>
</dbReference>
<dbReference type="PANTHER" id="PTHR31225">
    <property type="entry name" value="OS04G0344100 PROTEIN-RELATED"/>
    <property type="match status" value="1"/>
</dbReference>
<dbReference type="Pfam" id="PF01397">
    <property type="entry name" value="Terpene_synth"/>
    <property type="match status" value="1"/>
</dbReference>
<dbReference type="Pfam" id="PF03936">
    <property type="entry name" value="Terpene_synth_C"/>
    <property type="match status" value="1"/>
</dbReference>
<dbReference type="SFLD" id="SFLDS00005">
    <property type="entry name" value="Isoprenoid_Synthase_Type_I"/>
    <property type="match status" value="1"/>
</dbReference>
<dbReference type="SFLD" id="SFLDG01019">
    <property type="entry name" value="Terpene_Cyclase_Like_1_C_Termi"/>
    <property type="match status" value="1"/>
</dbReference>
<dbReference type="SFLD" id="SFLDG01014">
    <property type="entry name" value="Terpene_Cyclase_Like_1_N-term"/>
    <property type="match status" value="1"/>
</dbReference>
<dbReference type="SUPFAM" id="SSF48239">
    <property type="entry name" value="Terpenoid cyclases/Protein prenyltransferases"/>
    <property type="match status" value="1"/>
</dbReference>
<dbReference type="SUPFAM" id="SSF48576">
    <property type="entry name" value="Terpenoid synthases"/>
    <property type="match status" value="1"/>
</dbReference>
<proteinExistence type="evidence at protein level"/>
<gene>
    <name evidence="5" type="primary">TPS-Cin</name>
</gene>
<accession>C0PT35</accession>
<organism>
    <name type="scientific">Picea sitchensis</name>
    <name type="common">Sitka spruce</name>
    <name type="synonym">Pinus sitchensis</name>
    <dbReference type="NCBI Taxonomy" id="3332"/>
    <lineage>
        <taxon>Eukaryota</taxon>
        <taxon>Viridiplantae</taxon>
        <taxon>Streptophyta</taxon>
        <taxon>Embryophyta</taxon>
        <taxon>Tracheophyta</taxon>
        <taxon>Spermatophyta</taxon>
        <taxon>Pinopsida</taxon>
        <taxon>Pinidae</taxon>
        <taxon>Conifers I</taxon>
        <taxon>Pinales</taxon>
        <taxon>Pinaceae</taxon>
        <taxon>Picea</taxon>
    </lineage>
</organism>
<protein>
    <recommendedName>
        <fullName evidence="5">1,8-cineole synthase, chloroplastic</fullName>
        <ecNumber evidence="4">4.2.3.108</ecNumber>
    </recommendedName>
    <alternativeName>
        <fullName evidence="5">Terpene synthase TPS-Cin</fullName>
        <shortName evidence="5">PsTPS-Cin</shortName>
    </alternativeName>
</protein>